<proteinExistence type="evidence at protein level"/>
<gene>
    <name type="primary">Zbtb1</name>
</gene>
<keyword id="KW-0221">Differentiation</keyword>
<keyword id="KW-0238">DNA-binding</keyword>
<keyword id="KW-0391">Immunity</keyword>
<keyword id="KW-0399">Innate immunity</keyword>
<keyword id="KW-1017">Isopeptide bond</keyword>
<keyword id="KW-0479">Metal-binding</keyword>
<keyword id="KW-0539">Nucleus</keyword>
<keyword id="KW-0597">Phosphoprotein</keyword>
<keyword id="KW-1185">Reference proteome</keyword>
<keyword id="KW-0677">Repeat</keyword>
<keyword id="KW-0804">Transcription</keyword>
<keyword id="KW-0805">Transcription regulation</keyword>
<keyword id="KW-0832">Ubl conjugation</keyword>
<keyword id="KW-0862">Zinc</keyword>
<keyword id="KW-0863">Zinc-finger</keyword>
<comment type="function">
    <text evidence="1 5 6">Acts as a transcriptional repressor (By similarity). Represses cAMP-responsive element (CRE)-mediated transcriptional activation (By similarity). In addition, has a role in translesion DNA synthesis. Requires for UV-inducible RAD18 loading, PCNA monoubiquitination, POLH recruitment to replication factories and efficient translesion DNA synthesis (By similarity). Plays a key role in the transcriptional regulation of T lymphocyte development (PubMed:22201126, PubMed:22753936).</text>
</comment>
<comment type="subunit">
    <text evidence="1">Homodimer (By similarity). Homodimer (PubMed:22753936). Interacts (via BTB domain) with TRIM28 (unphosphorylated or phosphorylated form) (By similarity).</text>
</comment>
<comment type="subcellular location">
    <subcellularLocation>
        <location evidence="1">Nucleus</location>
    </subcellularLocation>
    <subcellularLocation>
        <location evidence="1">Nucleus</location>
        <location evidence="1">Nucleoplasm</location>
    </subcellularLocation>
    <text evidence="1">Localized in dot-like structures in the nucleus. Colocalized with SMRT in nuclear bodies. The sumoylated form is preferentially located in the nucleoplasm outside the nuclear bodies (By similarity).</text>
</comment>
<comment type="tissue specificity">
    <text evidence="6">Expressed strongly in thymus and spleen, less in lymph nodes and peripheral blood mononuclear cells (PBMCs) and weakly in bone marrow. Strongly expressed in immature, but weakly in mature bone marrow-lymphocyte B.</text>
</comment>
<comment type="domain">
    <text evidence="1">Both the BTB domain and C2H2-type motifs are necessary for transcriptional repression activity. The BTB domain is also necessary for oligomerization and efficient sumoylation. The hydrophobic cluster preceding Lys-328 enhanced sumoylation efficiency (By similarity).</text>
</comment>
<comment type="domain">
    <text evidence="1">The UBZ-type zinc finger domain is required for targeting ZBTB1 to UV damage sites and for PCNA monoubiquitination. UBZ-type zinc finger domain mediates binding to 'Lys-63'-linked polyubiquitin chains (in vitro).</text>
</comment>
<comment type="PTM">
    <text evidence="1">Sumoylated with SUMO2 at Lys-328 and to a lesser extent at Lys-266. Sumoylation inhibits its transcriptional repression activity and regulates its subcellular localization (By similarity).</text>
</comment>
<comment type="disruption phenotype">
    <text evidence="6">Thymus of embryos show a small number of T-cell progenitors that are unable to progress through thymic differentiation. Adult mice show vestigial thymus and lymph nodes and a reduced spleen size. In the periphery and in the spleen, display an absence of mature T-cells, a reduced number of NK cells, but a normal number of mature B-cells.</text>
</comment>
<organism>
    <name type="scientific">Mus musculus</name>
    <name type="common">Mouse</name>
    <dbReference type="NCBI Taxonomy" id="10090"/>
    <lineage>
        <taxon>Eukaryota</taxon>
        <taxon>Metazoa</taxon>
        <taxon>Chordata</taxon>
        <taxon>Craniata</taxon>
        <taxon>Vertebrata</taxon>
        <taxon>Euteleostomi</taxon>
        <taxon>Mammalia</taxon>
        <taxon>Eutheria</taxon>
        <taxon>Euarchontoglires</taxon>
        <taxon>Glires</taxon>
        <taxon>Rodentia</taxon>
        <taxon>Myomorpha</taxon>
        <taxon>Muroidea</taxon>
        <taxon>Muridae</taxon>
        <taxon>Murinae</taxon>
        <taxon>Mus</taxon>
        <taxon>Mus</taxon>
    </lineage>
</organism>
<accession>Q91VL9</accession>
<accession>Q8CDP7</accession>
<accession>Q99LD2</accession>
<feature type="chain" id="PRO_0000047708" description="Zinc finger and BTB domain-containing protein 1">
    <location>
        <begin position="1"/>
        <end position="713"/>
    </location>
</feature>
<feature type="domain" description="BTB" evidence="2">
    <location>
        <begin position="24"/>
        <end position="91"/>
    </location>
</feature>
<feature type="zinc finger region" description="C2H2-type 1; atypical" evidence="3">
    <location>
        <begin position="216"/>
        <end position="242"/>
    </location>
</feature>
<feature type="zinc finger region" description="C2H2-type 2; atypical" evidence="3">
    <location>
        <begin position="448"/>
        <end position="470"/>
    </location>
</feature>
<feature type="zinc finger region" description="UBZ-type" evidence="1">
    <location>
        <begin position="533"/>
        <end position="558"/>
    </location>
</feature>
<feature type="zinc finger region" description="C2H2-type 3" evidence="3">
    <location>
        <begin position="578"/>
        <end position="600"/>
    </location>
</feature>
<feature type="zinc finger region" description="C2H2-type 4" evidence="3">
    <location>
        <begin position="606"/>
        <end position="628"/>
    </location>
</feature>
<feature type="zinc finger region" description="C2H2-type 5" evidence="3">
    <location>
        <begin position="634"/>
        <end position="656"/>
    </location>
</feature>
<feature type="zinc finger region" description="C2H2-type 6" evidence="3">
    <location>
        <begin position="662"/>
        <end position="684"/>
    </location>
</feature>
<feature type="zinc finger region" description="C2H2-type 7" evidence="3">
    <location>
        <begin position="686"/>
        <end position="709"/>
    </location>
</feature>
<feature type="region of interest" description="Disordered" evidence="4">
    <location>
        <begin position="270"/>
        <end position="319"/>
    </location>
</feature>
<feature type="modified residue" description="Phosphoserine" evidence="8">
    <location>
        <position position="355"/>
    </location>
</feature>
<feature type="modified residue" description="Phosphothreonine" evidence="8">
    <location>
        <position position="356"/>
    </location>
</feature>
<feature type="cross-link" description="Glycyl lysine isopeptide (Lys-Gly) (interchain with G-Cter in SUMO2)" evidence="1">
    <location>
        <position position="3"/>
    </location>
</feature>
<feature type="cross-link" description="Glycyl lysine isopeptide (Lys-Gly) (interchain with G-Cter in SUMO2)" evidence="1">
    <location>
        <position position="200"/>
    </location>
</feature>
<feature type="cross-link" description="Glycyl lysine isopeptide (Lys-Gly) (interchain with G-Cter in SUMO2)" evidence="1">
    <location>
        <position position="205"/>
    </location>
</feature>
<feature type="cross-link" description="Glycyl lysine isopeptide (Lys-Gly) (interchain with G-Cter in SUMO2)" evidence="1">
    <location>
        <position position="261"/>
    </location>
</feature>
<feature type="cross-link" description="Glycyl lysine isopeptide (Lys-Gly) (interchain with G-Cter in SUMO2)" evidence="1">
    <location>
        <position position="266"/>
    </location>
</feature>
<feature type="cross-link" description="Glycyl lysine isopeptide (Lys-Gly) (interchain with G-Cter in SUMO2)" evidence="1">
    <location>
        <position position="276"/>
    </location>
</feature>
<feature type="cross-link" description="Glycyl lysine isopeptide (Lys-Gly) (interchain with G-Cter in SUMO2)" evidence="1">
    <location>
        <position position="284"/>
    </location>
</feature>
<feature type="cross-link" description="Glycyl lysine isopeptide (Lys-Gly) (interchain with G-Cter in SUMO2)" evidence="1">
    <location>
        <position position="304"/>
    </location>
</feature>
<feature type="cross-link" description="Glycyl lysine isopeptide (Lys-Gly) (interchain with G-Cter in SUMO2)" evidence="1">
    <location>
        <position position="316"/>
    </location>
</feature>
<feature type="cross-link" description="Glycyl lysine isopeptide (Lys-Gly) (interchain with G-Cter in SUMO2)" evidence="1">
    <location>
        <position position="328"/>
    </location>
</feature>
<feature type="cross-link" description="Glycyl lysine isopeptide (Lys-Gly) (interchain with G-Cter in SUMO2)" evidence="1">
    <location>
        <position position="340"/>
    </location>
</feature>
<feature type="cross-link" description="Glycyl lysine isopeptide (Lys-Gly) (interchain with G-Cter in SUMO2)" evidence="1">
    <location>
        <position position="346"/>
    </location>
</feature>
<feature type="cross-link" description="Glycyl lysine isopeptide (Lys-Gly) (interchain with G-Cter in SUMO2)" evidence="1">
    <location>
        <position position="381"/>
    </location>
</feature>
<feature type="cross-link" description="Glycyl lysine isopeptide (Lys-Gly) (interchain with G-Cter in SUMO2)" evidence="1">
    <location>
        <position position="528"/>
    </location>
</feature>
<feature type="cross-link" description="Glycyl lysine isopeptide (Lys-Gly) (interchain with G-Cter in SUMO2)" evidence="1">
    <location>
        <position position="563"/>
    </location>
</feature>
<feature type="sequence conflict" description="In Ref. 2; AAH03372." evidence="7" ref="2">
    <original>E</original>
    <variation>K</variation>
    <location>
        <position position="472"/>
    </location>
</feature>
<feature type="sequence conflict" description="In Ref. 1; BAC26603." evidence="7" ref="1">
    <original>N</original>
    <variation>K</variation>
    <location>
        <position position="643"/>
    </location>
</feature>
<protein>
    <recommendedName>
        <fullName>Zinc finger and BTB domain-containing protein 1</fullName>
    </recommendedName>
</protein>
<sequence length="713" mass="81952">MAKPSHSSYVLQQLNNQREWGFLCDCCIAIDDIYFQAHKAVLAACSSYFRMFFMNHQHSTAQLNLSNMKISAECFDLILQFMYLGKIMTAPSSFEQFKVAMNYLQLYNVPDCLEDIQDADCSSSKCSSSASSRQSSKMIFGVRMYEDTVARNGNEANRWCAEPSSTVNTPHHREPEEESLQLANFPEPLFDVCKKSSVSKLSTPKERVSRRFGRSFTCDSCGFGFSCEKLLDEHVLTCTNRHSYQNTTRAYHRIVDIRDGKDSNIKAELAEKDSSKTFSAQPDKYREDANQAPDDSASTTGSRKSTVEAGIAGEEKSRATETKRIIIKMEPEDIPADDMKDFNIIKVTEKDCNESTDNDELEDEPEEPFYRYYVEEDVGIKKSGRKTLKPRMSISVDERGGLENMRPPNNTSPIQEDAENASCELCGLTITEEDLSSHYLAKHIENICACGKCGQILVKGRQLQEHAQRCGEPQDLTMNGLGNADEKMDMEENPDEQSEIRDMFVEMLDDFRDNHYQINSIQKKQLFKHSACPFRCPNCGQRFETENLVVEHMSSCLDQDMFKGAIMEENERDHRRKHFCNLCGKGFYQRCHLREHYTVHTKEKQFVCQTCGKQFLRERQLRLHNDMHKGMARYVCSICDQGNFRKHDHVRHMISHLSGGETICQVCFQIFPNNEQLEQHMDVHLYTCGICGAKFNLRKDMRSHYNAKHLKRT</sequence>
<evidence type="ECO:0000250" key="1">
    <source>
        <dbReference type="UniProtKB" id="Q9Y2K1"/>
    </source>
</evidence>
<evidence type="ECO:0000255" key="2">
    <source>
        <dbReference type="PROSITE-ProRule" id="PRU00037"/>
    </source>
</evidence>
<evidence type="ECO:0000255" key="3">
    <source>
        <dbReference type="PROSITE-ProRule" id="PRU00042"/>
    </source>
</evidence>
<evidence type="ECO:0000256" key="4">
    <source>
        <dbReference type="SAM" id="MobiDB-lite"/>
    </source>
</evidence>
<evidence type="ECO:0000269" key="5">
    <source>
    </source>
</evidence>
<evidence type="ECO:0000269" key="6">
    <source>
    </source>
</evidence>
<evidence type="ECO:0000305" key="7"/>
<evidence type="ECO:0007744" key="8">
    <source>
    </source>
</evidence>
<reference key="1">
    <citation type="journal article" date="2005" name="Science">
        <title>The transcriptional landscape of the mammalian genome.</title>
        <authorList>
            <person name="Carninci P."/>
            <person name="Kasukawa T."/>
            <person name="Katayama S."/>
            <person name="Gough J."/>
            <person name="Frith M.C."/>
            <person name="Maeda N."/>
            <person name="Oyama R."/>
            <person name="Ravasi T."/>
            <person name="Lenhard B."/>
            <person name="Wells C."/>
            <person name="Kodzius R."/>
            <person name="Shimokawa K."/>
            <person name="Bajic V.B."/>
            <person name="Brenner S.E."/>
            <person name="Batalov S."/>
            <person name="Forrest A.R."/>
            <person name="Zavolan M."/>
            <person name="Davis M.J."/>
            <person name="Wilming L.G."/>
            <person name="Aidinis V."/>
            <person name="Allen J.E."/>
            <person name="Ambesi-Impiombato A."/>
            <person name="Apweiler R."/>
            <person name="Aturaliya R.N."/>
            <person name="Bailey T.L."/>
            <person name="Bansal M."/>
            <person name="Baxter L."/>
            <person name="Beisel K.W."/>
            <person name="Bersano T."/>
            <person name="Bono H."/>
            <person name="Chalk A.M."/>
            <person name="Chiu K.P."/>
            <person name="Choudhary V."/>
            <person name="Christoffels A."/>
            <person name="Clutterbuck D.R."/>
            <person name="Crowe M.L."/>
            <person name="Dalla E."/>
            <person name="Dalrymple B.P."/>
            <person name="de Bono B."/>
            <person name="Della Gatta G."/>
            <person name="di Bernardo D."/>
            <person name="Down T."/>
            <person name="Engstrom P."/>
            <person name="Fagiolini M."/>
            <person name="Faulkner G."/>
            <person name="Fletcher C.F."/>
            <person name="Fukushima T."/>
            <person name="Furuno M."/>
            <person name="Futaki S."/>
            <person name="Gariboldi M."/>
            <person name="Georgii-Hemming P."/>
            <person name="Gingeras T.R."/>
            <person name="Gojobori T."/>
            <person name="Green R.E."/>
            <person name="Gustincich S."/>
            <person name="Harbers M."/>
            <person name="Hayashi Y."/>
            <person name="Hensch T.K."/>
            <person name="Hirokawa N."/>
            <person name="Hill D."/>
            <person name="Huminiecki L."/>
            <person name="Iacono M."/>
            <person name="Ikeo K."/>
            <person name="Iwama A."/>
            <person name="Ishikawa T."/>
            <person name="Jakt M."/>
            <person name="Kanapin A."/>
            <person name="Katoh M."/>
            <person name="Kawasawa Y."/>
            <person name="Kelso J."/>
            <person name="Kitamura H."/>
            <person name="Kitano H."/>
            <person name="Kollias G."/>
            <person name="Krishnan S.P."/>
            <person name="Kruger A."/>
            <person name="Kummerfeld S.K."/>
            <person name="Kurochkin I.V."/>
            <person name="Lareau L.F."/>
            <person name="Lazarevic D."/>
            <person name="Lipovich L."/>
            <person name="Liu J."/>
            <person name="Liuni S."/>
            <person name="McWilliam S."/>
            <person name="Madan Babu M."/>
            <person name="Madera M."/>
            <person name="Marchionni L."/>
            <person name="Matsuda H."/>
            <person name="Matsuzawa S."/>
            <person name="Miki H."/>
            <person name="Mignone F."/>
            <person name="Miyake S."/>
            <person name="Morris K."/>
            <person name="Mottagui-Tabar S."/>
            <person name="Mulder N."/>
            <person name="Nakano N."/>
            <person name="Nakauchi H."/>
            <person name="Ng P."/>
            <person name="Nilsson R."/>
            <person name="Nishiguchi S."/>
            <person name="Nishikawa S."/>
            <person name="Nori F."/>
            <person name="Ohara O."/>
            <person name="Okazaki Y."/>
            <person name="Orlando V."/>
            <person name="Pang K.C."/>
            <person name="Pavan W.J."/>
            <person name="Pavesi G."/>
            <person name="Pesole G."/>
            <person name="Petrovsky N."/>
            <person name="Piazza S."/>
            <person name="Reed J."/>
            <person name="Reid J.F."/>
            <person name="Ring B.Z."/>
            <person name="Ringwald M."/>
            <person name="Rost B."/>
            <person name="Ruan Y."/>
            <person name="Salzberg S.L."/>
            <person name="Sandelin A."/>
            <person name="Schneider C."/>
            <person name="Schoenbach C."/>
            <person name="Sekiguchi K."/>
            <person name="Semple C.A."/>
            <person name="Seno S."/>
            <person name="Sessa L."/>
            <person name="Sheng Y."/>
            <person name="Shibata Y."/>
            <person name="Shimada H."/>
            <person name="Shimada K."/>
            <person name="Silva D."/>
            <person name="Sinclair B."/>
            <person name="Sperling S."/>
            <person name="Stupka E."/>
            <person name="Sugiura K."/>
            <person name="Sultana R."/>
            <person name="Takenaka Y."/>
            <person name="Taki K."/>
            <person name="Tammoja K."/>
            <person name="Tan S.L."/>
            <person name="Tang S."/>
            <person name="Taylor M.S."/>
            <person name="Tegner J."/>
            <person name="Teichmann S.A."/>
            <person name="Ueda H.R."/>
            <person name="van Nimwegen E."/>
            <person name="Verardo R."/>
            <person name="Wei C.L."/>
            <person name="Yagi K."/>
            <person name="Yamanishi H."/>
            <person name="Zabarovsky E."/>
            <person name="Zhu S."/>
            <person name="Zimmer A."/>
            <person name="Hide W."/>
            <person name="Bult C."/>
            <person name="Grimmond S.M."/>
            <person name="Teasdale R.D."/>
            <person name="Liu E.T."/>
            <person name="Brusic V."/>
            <person name="Quackenbush J."/>
            <person name="Wahlestedt C."/>
            <person name="Mattick J.S."/>
            <person name="Hume D.A."/>
            <person name="Kai C."/>
            <person name="Sasaki D."/>
            <person name="Tomaru Y."/>
            <person name="Fukuda S."/>
            <person name="Kanamori-Katayama M."/>
            <person name="Suzuki M."/>
            <person name="Aoki J."/>
            <person name="Arakawa T."/>
            <person name="Iida J."/>
            <person name="Imamura K."/>
            <person name="Itoh M."/>
            <person name="Kato T."/>
            <person name="Kawaji H."/>
            <person name="Kawagashira N."/>
            <person name="Kawashima T."/>
            <person name="Kojima M."/>
            <person name="Kondo S."/>
            <person name="Konno H."/>
            <person name="Nakano K."/>
            <person name="Ninomiya N."/>
            <person name="Nishio T."/>
            <person name="Okada M."/>
            <person name="Plessy C."/>
            <person name="Shibata K."/>
            <person name="Shiraki T."/>
            <person name="Suzuki S."/>
            <person name="Tagami M."/>
            <person name="Waki K."/>
            <person name="Watahiki A."/>
            <person name="Okamura-Oho Y."/>
            <person name="Suzuki H."/>
            <person name="Kawai J."/>
            <person name="Hayashizaki Y."/>
        </authorList>
    </citation>
    <scope>NUCLEOTIDE SEQUENCE [LARGE SCALE MRNA]</scope>
    <source>
        <strain>C57BL/6J</strain>
        <tissue>Embryo</tissue>
    </source>
</reference>
<reference key="2">
    <citation type="journal article" date="2004" name="Genome Res.">
        <title>The status, quality, and expansion of the NIH full-length cDNA project: the Mammalian Gene Collection (MGC).</title>
        <authorList>
            <consortium name="The MGC Project Team"/>
        </authorList>
    </citation>
    <scope>NUCLEOTIDE SEQUENCE [LARGE SCALE MRNA]</scope>
    <source>
        <tissue>Mammary tumor</tissue>
    </source>
</reference>
<reference key="3">
    <citation type="journal article" date="2010" name="Cell">
        <title>A tissue-specific atlas of mouse protein phosphorylation and expression.</title>
        <authorList>
            <person name="Huttlin E.L."/>
            <person name="Jedrychowski M.P."/>
            <person name="Elias J.E."/>
            <person name="Goswami T."/>
            <person name="Rad R."/>
            <person name="Beausoleil S.A."/>
            <person name="Villen J."/>
            <person name="Haas W."/>
            <person name="Sowa M.E."/>
            <person name="Gygi S.P."/>
        </authorList>
    </citation>
    <scope>PHOSPHORYLATION [LARGE SCALE ANALYSIS] AT SER-355 AND THR-356</scope>
    <scope>IDENTIFICATION BY MASS SPECTROMETRY [LARGE SCALE ANALYSIS]</scope>
    <source>
        <tissue>Brown adipose tissue</tissue>
        <tissue>Kidney</tissue>
        <tissue>Liver</tissue>
        <tissue>Lung</tissue>
        <tissue>Spleen</tissue>
        <tissue>Testis</tissue>
    </source>
</reference>
<reference key="4">
    <citation type="journal article" date="2012" name="J. Exp. Med.">
        <title>ZBTB1 is a determinant of lymphoid development.</title>
        <authorList>
            <person name="Siggs O.M."/>
            <person name="Li X."/>
            <person name="Xia Y."/>
            <person name="Beutler B."/>
        </authorList>
    </citation>
    <scope>FUNCTION</scope>
</reference>
<reference key="5">
    <citation type="journal article" date="2012" name="J. Immunol.">
        <title>Transcription factor zinc finger and BTB domain 1 is essential for lymphocyte development.</title>
        <authorList>
            <person name="Punwani D."/>
            <person name="Simon K."/>
            <person name="Choi Y."/>
            <person name="Dutra A."/>
            <person name="Gonzalez-Espinosa D."/>
            <person name="Pak E."/>
            <person name="Naradikian M."/>
            <person name="Song C.H."/>
            <person name="Zhang J."/>
            <person name="Bodine D.M."/>
            <person name="Puck J.M."/>
        </authorList>
    </citation>
    <scope>FUNCTION</scope>
    <scope>SUBUNIT</scope>
    <scope>DISRUPTION PHENOTYPE</scope>
    <scope>TISSUE SPECIFICITY</scope>
</reference>
<name>ZBTB1_MOUSE</name>
<dbReference type="EMBL" id="AK029762">
    <property type="protein sequence ID" value="BAC26603.1"/>
    <property type="molecule type" value="mRNA"/>
</dbReference>
<dbReference type="EMBL" id="AK035036">
    <property type="protein sequence ID" value="BAC28921.1"/>
    <property type="molecule type" value="mRNA"/>
</dbReference>
<dbReference type="EMBL" id="AK049397">
    <property type="protein sequence ID" value="BAC33733.1"/>
    <property type="molecule type" value="mRNA"/>
</dbReference>
<dbReference type="EMBL" id="BC003372">
    <property type="protein sequence ID" value="AAH03372.1"/>
    <property type="molecule type" value="mRNA"/>
</dbReference>
<dbReference type="EMBL" id="BC012239">
    <property type="protein sequence ID" value="AAH12239.1"/>
    <property type="molecule type" value="mRNA"/>
</dbReference>
<dbReference type="CCDS" id="CCDS25992.1"/>
<dbReference type="RefSeq" id="NP_848859.1">
    <property type="nucleotide sequence ID" value="NM_178744.3"/>
</dbReference>
<dbReference type="RefSeq" id="XP_006515958.1">
    <property type="nucleotide sequence ID" value="XM_006515895.4"/>
</dbReference>
<dbReference type="SMR" id="Q91VL9"/>
<dbReference type="BioGRID" id="234520">
    <property type="interactions" value="2"/>
</dbReference>
<dbReference type="FunCoup" id="Q91VL9">
    <property type="interactions" value="4671"/>
</dbReference>
<dbReference type="IntAct" id="Q91VL9">
    <property type="interactions" value="1"/>
</dbReference>
<dbReference type="STRING" id="10090.ENSMUSP00000041955"/>
<dbReference type="iPTMnet" id="Q91VL9"/>
<dbReference type="PhosphoSitePlus" id="Q91VL9"/>
<dbReference type="jPOST" id="Q91VL9"/>
<dbReference type="PaxDb" id="10090-ENSMUSP00000041955"/>
<dbReference type="ProteomicsDB" id="275266"/>
<dbReference type="Pumba" id="Q91VL9"/>
<dbReference type="Antibodypedia" id="24644">
    <property type="antibodies" value="73 antibodies from 22 providers"/>
</dbReference>
<dbReference type="DNASU" id="268564"/>
<dbReference type="Ensembl" id="ENSMUST00000042779.4">
    <property type="protein sequence ID" value="ENSMUSP00000041955.4"/>
    <property type="gene ID" value="ENSMUSG00000033454.7"/>
</dbReference>
<dbReference type="GeneID" id="268564"/>
<dbReference type="KEGG" id="mmu:268564"/>
<dbReference type="UCSC" id="uc007nyd.2">
    <property type="organism name" value="mouse"/>
</dbReference>
<dbReference type="AGR" id="MGI:2442326"/>
<dbReference type="CTD" id="22890"/>
<dbReference type="MGI" id="MGI:2442326">
    <property type="gene designation" value="Zbtb1"/>
</dbReference>
<dbReference type="VEuPathDB" id="HostDB:ENSMUSG00000033454"/>
<dbReference type="eggNOG" id="KOG1721">
    <property type="taxonomic scope" value="Eukaryota"/>
</dbReference>
<dbReference type="GeneTree" id="ENSGT00940000157501"/>
<dbReference type="HOGENOM" id="CLU_028599_0_0_1"/>
<dbReference type="InParanoid" id="Q91VL9"/>
<dbReference type="OMA" id="EDDWPEA"/>
<dbReference type="OrthoDB" id="8922241at2759"/>
<dbReference type="PhylomeDB" id="Q91VL9"/>
<dbReference type="TreeFam" id="TF332229"/>
<dbReference type="BioGRID-ORCS" id="268564">
    <property type="hits" value="5 hits in 117 CRISPR screens"/>
</dbReference>
<dbReference type="ChiTaRS" id="Zbtb1">
    <property type="organism name" value="mouse"/>
</dbReference>
<dbReference type="PRO" id="PR:Q91VL9"/>
<dbReference type="Proteomes" id="UP000000589">
    <property type="component" value="Chromosome 12"/>
</dbReference>
<dbReference type="RNAct" id="Q91VL9">
    <property type="molecule type" value="protein"/>
</dbReference>
<dbReference type="Bgee" id="ENSMUSG00000033454">
    <property type="expression patterns" value="Expressed in cumulus cell and 263 other cell types or tissues"/>
</dbReference>
<dbReference type="ExpressionAtlas" id="Q91VL9">
    <property type="expression patterns" value="baseline and differential"/>
</dbReference>
<dbReference type="GO" id="GO:0016604">
    <property type="term" value="C:nuclear body"/>
    <property type="evidence" value="ECO:0000250"/>
    <property type="project" value="UniProtKB"/>
</dbReference>
<dbReference type="GO" id="GO:0031965">
    <property type="term" value="C:nuclear membrane"/>
    <property type="evidence" value="ECO:0007669"/>
    <property type="project" value="Ensembl"/>
</dbReference>
<dbReference type="GO" id="GO:0005654">
    <property type="term" value="C:nucleoplasm"/>
    <property type="evidence" value="ECO:0000250"/>
    <property type="project" value="UniProtKB"/>
</dbReference>
<dbReference type="GO" id="GO:0005634">
    <property type="term" value="C:nucleus"/>
    <property type="evidence" value="ECO:0000250"/>
    <property type="project" value="UniProtKB"/>
</dbReference>
<dbReference type="GO" id="GO:0003677">
    <property type="term" value="F:DNA binding"/>
    <property type="evidence" value="ECO:0007669"/>
    <property type="project" value="UniProtKB-KW"/>
</dbReference>
<dbReference type="GO" id="GO:0070530">
    <property type="term" value="F:K63-linked polyubiquitin modification-dependent protein binding"/>
    <property type="evidence" value="ECO:0000250"/>
    <property type="project" value="UniProtKB"/>
</dbReference>
<dbReference type="GO" id="GO:0046982">
    <property type="term" value="F:protein heterodimerization activity"/>
    <property type="evidence" value="ECO:0000250"/>
    <property type="project" value="UniProtKB"/>
</dbReference>
<dbReference type="GO" id="GO:0042803">
    <property type="term" value="F:protein homodimerization activity"/>
    <property type="evidence" value="ECO:0000314"/>
    <property type="project" value="UniProtKB"/>
</dbReference>
<dbReference type="GO" id="GO:0008270">
    <property type="term" value="F:zinc ion binding"/>
    <property type="evidence" value="ECO:0007669"/>
    <property type="project" value="UniProtKB-KW"/>
</dbReference>
<dbReference type="GO" id="GO:0030183">
    <property type="term" value="P:B cell differentiation"/>
    <property type="evidence" value="ECO:0000315"/>
    <property type="project" value="MGI"/>
</dbReference>
<dbReference type="GO" id="GO:0034644">
    <property type="term" value="P:cellular response to UV"/>
    <property type="evidence" value="ECO:0007669"/>
    <property type="project" value="Ensembl"/>
</dbReference>
<dbReference type="GO" id="GO:0006338">
    <property type="term" value="P:chromatin remodeling"/>
    <property type="evidence" value="ECO:0000250"/>
    <property type="project" value="UniProtKB"/>
</dbReference>
<dbReference type="GO" id="GO:0006974">
    <property type="term" value="P:DNA damage response"/>
    <property type="evidence" value="ECO:0000250"/>
    <property type="project" value="UniProtKB"/>
</dbReference>
<dbReference type="GO" id="GO:0006281">
    <property type="term" value="P:DNA repair"/>
    <property type="evidence" value="ECO:0000250"/>
    <property type="project" value="UniProtKB"/>
</dbReference>
<dbReference type="GO" id="GO:0045087">
    <property type="term" value="P:innate immune response"/>
    <property type="evidence" value="ECO:0007669"/>
    <property type="project" value="UniProtKB-KW"/>
</dbReference>
<dbReference type="GO" id="GO:0042789">
    <property type="term" value="P:mRNA transcription by RNA polymerase II"/>
    <property type="evidence" value="ECO:0000250"/>
    <property type="project" value="UniProtKB"/>
</dbReference>
<dbReference type="GO" id="GO:0000122">
    <property type="term" value="P:negative regulation of transcription by RNA polymerase II"/>
    <property type="evidence" value="ECO:0000250"/>
    <property type="project" value="UniProtKB"/>
</dbReference>
<dbReference type="GO" id="GO:0032825">
    <property type="term" value="P:positive regulation of natural killer cell differentiation"/>
    <property type="evidence" value="ECO:0000315"/>
    <property type="project" value="UniProtKB"/>
</dbReference>
<dbReference type="GO" id="GO:2000176">
    <property type="term" value="P:positive regulation of pro-T cell differentiation"/>
    <property type="evidence" value="ECO:0000315"/>
    <property type="project" value="UniProtKB"/>
</dbReference>
<dbReference type="GO" id="GO:0045582">
    <property type="term" value="P:positive regulation of T cell differentiation"/>
    <property type="evidence" value="ECO:0000315"/>
    <property type="project" value="UniProtKB"/>
</dbReference>
<dbReference type="GO" id="GO:0002711">
    <property type="term" value="P:positive regulation of T cell mediated immunity"/>
    <property type="evidence" value="ECO:0000314"/>
    <property type="project" value="UniProtKB"/>
</dbReference>
<dbReference type="GO" id="GO:0051260">
    <property type="term" value="P:protein homooligomerization"/>
    <property type="evidence" value="ECO:0000250"/>
    <property type="project" value="UniProtKB"/>
</dbReference>
<dbReference type="GO" id="GO:0033077">
    <property type="term" value="P:T cell differentiation in thymus"/>
    <property type="evidence" value="ECO:0000315"/>
    <property type="project" value="MGI"/>
</dbReference>
<dbReference type="GO" id="GO:0048538">
    <property type="term" value="P:thymus development"/>
    <property type="evidence" value="ECO:0000315"/>
    <property type="project" value="UniProtKB"/>
</dbReference>
<dbReference type="GO" id="GO:0019985">
    <property type="term" value="P:translesion synthesis"/>
    <property type="evidence" value="ECO:0000250"/>
    <property type="project" value="UniProtKB"/>
</dbReference>
<dbReference type="CDD" id="cd18192">
    <property type="entry name" value="BTB_POZ_ZBTB1"/>
    <property type="match status" value="1"/>
</dbReference>
<dbReference type="FunFam" id="3.30.710.10:FF:000109">
    <property type="entry name" value="zinc finger and BTB domain-containing protein 1"/>
    <property type="match status" value="1"/>
</dbReference>
<dbReference type="Gene3D" id="3.30.160.60">
    <property type="entry name" value="Classic Zinc Finger"/>
    <property type="match status" value="3"/>
</dbReference>
<dbReference type="Gene3D" id="3.30.710.10">
    <property type="entry name" value="Potassium Channel Kv1.1, Chain A"/>
    <property type="match status" value="1"/>
</dbReference>
<dbReference type="InterPro" id="IPR000210">
    <property type="entry name" value="BTB/POZ_dom"/>
</dbReference>
<dbReference type="InterPro" id="IPR011333">
    <property type="entry name" value="SKP1/BTB/POZ_sf"/>
</dbReference>
<dbReference type="InterPro" id="IPR036236">
    <property type="entry name" value="Znf_C2H2_sf"/>
</dbReference>
<dbReference type="InterPro" id="IPR013087">
    <property type="entry name" value="Znf_C2H2_type"/>
</dbReference>
<dbReference type="PANTHER" id="PTHR24394:SF42">
    <property type="entry name" value="ZINC FINGER AND BTB DOMAIN CONTAINING 1"/>
    <property type="match status" value="1"/>
</dbReference>
<dbReference type="PANTHER" id="PTHR24394">
    <property type="entry name" value="ZINC FINGER PROTEIN"/>
    <property type="match status" value="1"/>
</dbReference>
<dbReference type="Pfam" id="PF00651">
    <property type="entry name" value="BTB"/>
    <property type="match status" value="1"/>
</dbReference>
<dbReference type="SMART" id="SM00225">
    <property type="entry name" value="BTB"/>
    <property type="match status" value="1"/>
</dbReference>
<dbReference type="SMART" id="SM00355">
    <property type="entry name" value="ZnF_C2H2"/>
    <property type="match status" value="8"/>
</dbReference>
<dbReference type="SUPFAM" id="SSF57667">
    <property type="entry name" value="beta-beta-alpha zinc fingers"/>
    <property type="match status" value="2"/>
</dbReference>
<dbReference type="SUPFAM" id="SSF54695">
    <property type="entry name" value="POZ domain"/>
    <property type="match status" value="1"/>
</dbReference>
<dbReference type="PROSITE" id="PS50097">
    <property type="entry name" value="BTB"/>
    <property type="match status" value="1"/>
</dbReference>
<dbReference type="PROSITE" id="PS00028">
    <property type="entry name" value="ZINC_FINGER_C2H2_1"/>
    <property type="match status" value="4"/>
</dbReference>
<dbReference type="PROSITE" id="PS50157">
    <property type="entry name" value="ZINC_FINGER_C2H2_2"/>
    <property type="match status" value="4"/>
</dbReference>